<gene>
    <name type="primary">hxuC</name>
    <name type="ordered locus">NTHI0369</name>
</gene>
<comment type="function">
    <text evidence="1">Required for utilization of free heme at low concentrations.</text>
</comment>
<comment type="subcellular location">
    <subcellularLocation>
        <location evidence="3">Cell outer membrane</location>
        <topology evidence="3">Multi-pass membrane protein</topology>
    </subcellularLocation>
</comment>
<comment type="similarity">
    <text evidence="4">Belongs to the TonB-dependent receptor family.</text>
</comment>
<name>HXUC_HAEI8</name>
<protein>
    <recommendedName>
        <fullName>Heme/hemopexin utilization protein C</fullName>
    </recommendedName>
</protein>
<evidence type="ECO:0000250" key="1"/>
<evidence type="ECO:0000255" key="2"/>
<evidence type="ECO:0000255" key="3">
    <source>
        <dbReference type="PROSITE-ProRule" id="PRU01360"/>
    </source>
</evidence>
<evidence type="ECO:0000305" key="4"/>
<feature type="signal peptide" evidence="2">
    <location>
        <begin position="1"/>
        <end position="21"/>
    </location>
</feature>
<feature type="chain" id="PRO_0000230231" description="Heme/hemopexin utilization protein C">
    <location>
        <begin position="22"/>
        <end position="709"/>
    </location>
</feature>
<feature type="domain" description="TBDR plug" evidence="3">
    <location>
        <begin position="36"/>
        <end position="147"/>
    </location>
</feature>
<feature type="domain" description="TBDR beta-barrel" evidence="3">
    <location>
        <begin position="158"/>
        <end position="709"/>
    </location>
</feature>
<feature type="short sequence motif" description="TonB C-terminal box">
    <location>
        <begin position="692"/>
        <end position="709"/>
    </location>
</feature>
<dbReference type="EMBL" id="CP000057">
    <property type="protein sequence ID" value="AAX87321.1"/>
    <property type="molecule type" value="Genomic_DNA"/>
</dbReference>
<dbReference type="RefSeq" id="WP_011271952.1">
    <property type="nucleotide sequence ID" value="NC_007146.2"/>
</dbReference>
<dbReference type="SMR" id="Q4QNS6"/>
<dbReference type="KEGG" id="hit:NTHI0369"/>
<dbReference type="HOGENOM" id="CLU_008287_19_3_6"/>
<dbReference type="Proteomes" id="UP000002525">
    <property type="component" value="Chromosome"/>
</dbReference>
<dbReference type="GO" id="GO:0009279">
    <property type="term" value="C:cell outer membrane"/>
    <property type="evidence" value="ECO:0007669"/>
    <property type="project" value="UniProtKB-SubCell"/>
</dbReference>
<dbReference type="GO" id="GO:0015232">
    <property type="term" value="F:heme transmembrane transporter activity"/>
    <property type="evidence" value="ECO:0007669"/>
    <property type="project" value="InterPro"/>
</dbReference>
<dbReference type="GO" id="GO:0015344">
    <property type="term" value="F:siderophore uptake transmembrane transporter activity"/>
    <property type="evidence" value="ECO:0007669"/>
    <property type="project" value="TreeGrafter"/>
</dbReference>
<dbReference type="CDD" id="cd01347">
    <property type="entry name" value="ligand_gated_channel"/>
    <property type="match status" value="1"/>
</dbReference>
<dbReference type="Gene3D" id="2.40.170.20">
    <property type="entry name" value="TonB-dependent receptor, beta-barrel domain"/>
    <property type="match status" value="1"/>
</dbReference>
<dbReference type="Gene3D" id="2.170.130.10">
    <property type="entry name" value="TonB-dependent receptor, plug domain"/>
    <property type="match status" value="1"/>
</dbReference>
<dbReference type="InterPro" id="IPR012910">
    <property type="entry name" value="Plug_dom"/>
</dbReference>
<dbReference type="InterPro" id="IPR037066">
    <property type="entry name" value="Plug_dom_sf"/>
</dbReference>
<dbReference type="InterPro" id="IPR039426">
    <property type="entry name" value="TonB-dep_rcpt-like"/>
</dbReference>
<dbReference type="InterPro" id="IPR000531">
    <property type="entry name" value="TonB-dep_rcpt_b-brl"/>
</dbReference>
<dbReference type="InterPro" id="IPR011276">
    <property type="entry name" value="TonB_haem/Hb_rcpt"/>
</dbReference>
<dbReference type="InterPro" id="IPR010949">
    <property type="entry name" value="TonB_Hb/transfer/lactofer_rcpt"/>
</dbReference>
<dbReference type="InterPro" id="IPR036942">
    <property type="entry name" value="TonB_rcpt_b-brl_sf"/>
</dbReference>
<dbReference type="InterPro" id="IPR010917">
    <property type="entry name" value="TonB_rcpt_CS"/>
</dbReference>
<dbReference type="NCBIfam" id="TIGR01785">
    <property type="entry name" value="TonB-hemin"/>
    <property type="match status" value="1"/>
</dbReference>
<dbReference type="NCBIfam" id="TIGR01786">
    <property type="entry name" value="TonB-hemlactrns"/>
    <property type="match status" value="1"/>
</dbReference>
<dbReference type="PANTHER" id="PTHR30069:SF41">
    <property type="entry name" value="HEME_HEMOPEXIN UTILIZATION PROTEIN C"/>
    <property type="match status" value="1"/>
</dbReference>
<dbReference type="PANTHER" id="PTHR30069">
    <property type="entry name" value="TONB-DEPENDENT OUTER MEMBRANE RECEPTOR"/>
    <property type="match status" value="1"/>
</dbReference>
<dbReference type="Pfam" id="PF07715">
    <property type="entry name" value="Plug"/>
    <property type="match status" value="1"/>
</dbReference>
<dbReference type="Pfam" id="PF00593">
    <property type="entry name" value="TonB_dep_Rec_b-barrel"/>
    <property type="match status" value="1"/>
</dbReference>
<dbReference type="SUPFAM" id="SSF56935">
    <property type="entry name" value="Porins"/>
    <property type="match status" value="1"/>
</dbReference>
<dbReference type="PROSITE" id="PS01156">
    <property type="entry name" value="TONB_DEPENDENT_REC_2"/>
    <property type="match status" value="1"/>
</dbReference>
<dbReference type="PROSITE" id="PS52016">
    <property type="entry name" value="TONB_DEPENDENT_REC_3"/>
    <property type="match status" value="1"/>
</dbReference>
<accession>Q4QNS6</accession>
<reference key="1">
    <citation type="journal article" date="2005" name="J. Bacteriol.">
        <title>Genomic sequence of an otitis media isolate of nontypeable Haemophilus influenzae: comparative study with H. influenzae serotype d, strain KW20.</title>
        <authorList>
            <person name="Harrison A."/>
            <person name="Dyer D.W."/>
            <person name="Gillaspy A."/>
            <person name="Ray W.C."/>
            <person name="Mungur R."/>
            <person name="Carson M.B."/>
            <person name="Zhong H."/>
            <person name="Gipson J."/>
            <person name="Gipson M."/>
            <person name="Johnson L.S."/>
            <person name="Lewis L."/>
            <person name="Bakaletz L.O."/>
            <person name="Munson R.S. Jr."/>
        </authorList>
    </citation>
    <scope>NUCLEOTIDE SEQUENCE [LARGE SCALE GENOMIC DNA]</scope>
    <source>
        <strain>86-028NP</strain>
    </source>
</reference>
<sequence>MRFSKLSLAITTTLVTANALAQSVELDSINVIATRDPSRFTYTPQKQSKDSLLSKQATSVAAALEDIPNVDVRGGSRSIAQKPNIRGLSDNRVVQVIDGVRQNFDLAHRGSYFLPMSLIQEIEVIKGPSSSLWGSGALGGVVAMRTPNALDLLKNNDKFGVKIRQGYQTANNLSEKDVSVFAANDKFDVLISGFYNNADNLRIGKGNKLNNTAYKQFGGLAKFGWQINDANRVELSHRETRFKQTAPGNNEAKNELTNEQIIEKINEYHNPLNNFPPKAKPSLEEFYSGVRARLGGVSYLSDQQIPDQSTVFNYYLTPDNPYLNTHIALYNNKTIEKEQRKVSGVKDQTKLTTRGINLRNSSELSHISFVYGVDYMRDKISTERGTNDKDAKFRAEPYNANSNTTGVYLIAHIPLFGEKLLLSPSVRYDHYDTSSKTVKYKDNHLSPATKLTWKVTNWLDFTAKYNEAFRAPSMQERFVSGAHFGTSTRVGDIINSFVANPNLRPETAKNKEITANLHFDSLFKQGDKFKIEATYFRNDVKDLINLKRLDDPNANGALSRTNSQYQNIANARLSGIELQAQYQTERLTLFTNYGSTKGRDKDSGEALSNIAASKIGVGADYALVKDKFTVGATITHYAAQHRVPKDHAVTYPSYILTDLRATYAPLKGEWKNLRLDFALENLFDRKYQPAFSLMEGTGRNAKISAVYSF</sequence>
<proteinExistence type="inferred from homology"/>
<keyword id="KW-0998">Cell outer membrane</keyword>
<keyword id="KW-0472">Membrane</keyword>
<keyword id="KW-0732">Signal</keyword>
<keyword id="KW-0798">TonB box</keyword>
<keyword id="KW-0812">Transmembrane</keyword>
<keyword id="KW-1134">Transmembrane beta strand</keyword>
<keyword id="KW-0813">Transport</keyword>
<organism>
    <name type="scientific">Haemophilus influenzae (strain 86-028NP)</name>
    <dbReference type="NCBI Taxonomy" id="281310"/>
    <lineage>
        <taxon>Bacteria</taxon>
        <taxon>Pseudomonadati</taxon>
        <taxon>Pseudomonadota</taxon>
        <taxon>Gammaproteobacteria</taxon>
        <taxon>Pasteurellales</taxon>
        <taxon>Pasteurellaceae</taxon>
        <taxon>Haemophilus</taxon>
    </lineage>
</organism>